<proteinExistence type="evidence at protein level"/>
<accession>Q8EJW3</accession>
<dbReference type="EC" id="4.2.1.117" evidence="3"/>
<dbReference type="EC" id="4.2.1.3" evidence="3"/>
<dbReference type="EMBL" id="AE014299">
    <property type="protein sequence ID" value="AAN53428.1"/>
    <property type="molecule type" value="Genomic_DNA"/>
</dbReference>
<dbReference type="RefSeq" id="NP_715983.1">
    <property type="nucleotide sequence ID" value="NC_004347.2"/>
</dbReference>
<dbReference type="RefSeq" id="WP_011070708.1">
    <property type="nucleotide sequence ID" value="NC_004347.2"/>
</dbReference>
<dbReference type="SMR" id="Q8EJW3"/>
<dbReference type="STRING" id="211586.SO_0343"/>
<dbReference type="PaxDb" id="211586-SO_0343"/>
<dbReference type="KEGG" id="son:SO_0343"/>
<dbReference type="PATRIC" id="fig|211586.12.peg.333"/>
<dbReference type="eggNOG" id="COG1048">
    <property type="taxonomic scope" value="Bacteria"/>
</dbReference>
<dbReference type="HOGENOM" id="CLU_013476_2_1_6"/>
<dbReference type="OrthoDB" id="9764318at2"/>
<dbReference type="PhylomeDB" id="Q8EJW3"/>
<dbReference type="BioCyc" id="MetaCyc:MONOMER-13619"/>
<dbReference type="BioCyc" id="SONE211586:G1GMP-328-MONOMER"/>
<dbReference type="BRENDA" id="4.2.1.117">
    <property type="organism ID" value="5706"/>
</dbReference>
<dbReference type="UniPathway" id="UPA00946"/>
<dbReference type="Proteomes" id="UP000008186">
    <property type="component" value="Chromosome"/>
</dbReference>
<dbReference type="GO" id="GO:0005829">
    <property type="term" value="C:cytosol"/>
    <property type="evidence" value="ECO:0000318"/>
    <property type="project" value="GO_Central"/>
</dbReference>
<dbReference type="GO" id="GO:0051539">
    <property type="term" value="F:4 iron, 4 sulfur cluster binding"/>
    <property type="evidence" value="ECO:0000318"/>
    <property type="project" value="GO_Central"/>
</dbReference>
<dbReference type="GO" id="GO:0003994">
    <property type="term" value="F:aconitate hydratase activity"/>
    <property type="evidence" value="ECO:0000318"/>
    <property type="project" value="GO_Central"/>
</dbReference>
<dbReference type="GO" id="GO:0016836">
    <property type="term" value="F:hydro-lyase activity"/>
    <property type="evidence" value="ECO:0000314"/>
    <property type="project" value="UniProtKB"/>
</dbReference>
<dbReference type="GO" id="GO:0030350">
    <property type="term" value="F:iron-responsive element binding"/>
    <property type="evidence" value="ECO:0000318"/>
    <property type="project" value="GO_Central"/>
</dbReference>
<dbReference type="GO" id="GO:0046872">
    <property type="term" value="F:metal ion binding"/>
    <property type="evidence" value="ECO:0007669"/>
    <property type="project" value="UniProtKB-KW"/>
</dbReference>
<dbReference type="GO" id="GO:0019629">
    <property type="term" value="P:propionate catabolic process, 2-methylcitrate cycle"/>
    <property type="evidence" value="ECO:0000314"/>
    <property type="project" value="UniProtKB"/>
</dbReference>
<dbReference type="GO" id="GO:0019679">
    <property type="term" value="P:propionate metabolic process, methylcitrate cycle"/>
    <property type="evidence" value="ECO:0007669"/>
    <property type="project" value="InterPro"/>
</dbReference>
<dbReference type="GO" id="GO:0006099">
    <property type="term" value="P:tricarboxylic acid cycle"/>
    <property type="evidence" value="ECO:0000318"/>
    <property type="project" value="GO_Central"/>
</dbReference>
<dbReference type="FunFam" id="3.20.19.10:FF:000006">
    <property type="entry name" value="Aconitate hydratase 1"/>
    <property type="match status" value="1"/>
</dbReference>
<dbReference type="FunFam" id="3.30.499.10:FF:000014">
    <property type="entry name" value="Aconitate hydratase 1"/>
    <property type="match status" value="1"/>
</dbReference>
<dbReference type="Gene3D" id="6.10.190.10">
    <property type="match status" value="1"/>
</dbReference>
<dbReference type="Gene3D" id="3.30.499.10">
    <property type="entry name" value="Aconitase, domain 3"/>
    <property type="match status" value="2"/>
</dbReference>
<dbReference type="Gene3D" id="3.20.19.10">
    <property type="entry name" value="Aconitase, domain 4"/>
    <property type="match status" value="1"/>
</dbReference>
<dbReference type="InterPro" id="IPR012708">
    <property type="entry name" value="2Me_IsoCit_deHydtase_FeS-dep"/>
</dbReference>
<dbReference type="InterPro" id="IPR015931">
    <property type="entry name" value="Acnase/IPM_dHydase_lsu_aba_1/3"/>
</dbReference>
<dbReference type="InterPro" id="IPR001030">
    <property type="entry name" value="Acoase/IPM_deHydtase_lsu_aba"/>
</dbReference>
<dbReference type="InterPro" id="IPR015928">
    <property type="entry name" value="Aconitase/3IPM_dehydase_swvl"/>
</dbReference>
<dbReference type="InterPro" id="IPR006249">
    <property type="entry name" value="Aconitase/IRP2"/>
</dbReference>
<dbReference type="InterPro" id="IPR036008">
    <property type="entry name" value="Aconitase_4Fe-4S_dom"/>
</dbReference>
<dbReference type="InterPro" id="IPR000573">
    <property type="entry name" value="AconitaseA/IPMdHydase_ssu_swvl"/>
</dbReference>
<dbReference type="NCBIfam" id="TIGR02333">
    <property type="entry name" value="2met_isocit_dHY"/>
    <property type="match status" value="1"/>
</dbReference>
<dbReference type="NCBIfam" id="NF006757">
    <property type="entry name" value="PRK09277.1"/>
    <property type="match status" value="1"/>
</dbReference>
<dbReference type="NCBIfam" id="NF009520">
    <property type="entry name" value="PRK12881.1"/>
    <property type="match status" value="1"/>
</dbReference>
<dbReference type="PANTHER" id="PTHR11670">
    <property type="entry name" value="ACONITASE/IRON-RESPONSIVE ELEMENT FAMILY MEMBER"/>
    <property type="match status" value="1"/>
</dbReference>
<dbReference type="Pfam" id="PF00330">
    <property type="entry name" value="Aconitase"/>
    <property type="match status" value="1"/>
</dbReference>
<dbReference type="Pfam" id="PF00694">
    <property type="entry name" value="Aconitase_C"/>
    <property type="match status" value="1"/>
</dbReference>
<dbReference type="PRINTS" id="PR00415">
    <property type="entry name" value="ACONITASE"/>
</dbReference>
<dbReference type="SUPFAM" id="SSF53732">
    <property type="entry name" value="Aconitase iron-sulfur domain"/>
    <property type="match status" value="1"/>
</dbReference>
<dbReference type="SUPFAM" id="SSF52016">
    <property type="entry name" value="LeuD/IlvD-like"/>
    <property type="match status" value="1"/>
</dbReference>
<name>ACND_SHEON</name>
<gene>
    <name type="primary">acnD</name>
    <name type="ordered locus">SO_0343</name>
</gene>
<sequence>MSTVMNTQYRKPLPGTALDYFDTREAIEAIAPGAYAKLPYTSRVLAENLVRRCEPEMLTASLKQIIESKQELDFPWFPARVVCHDILGQTALVDLAGLRDAIAAKGGDPAQVNPVVPTQLIVDHSLAVEYGGFDKDAFAKNRAIEDRRNEDRFHFINWTQKAFKNIDVIPQGNGIMHQINLERMSPVIHARNGVAFPDTLVGTDSHTPHVDALGVIAIGVGGLEAESVMLGRASYMRLPDIIGVELTGKPQPGITATDIVLALTEFLRAQKVVSSYLEFFGEGAEALTLGDRATISNMTPEFGATAAMFYIDQQTLDYLTLTGREAEQVKLVETYAKTAGLWSDDLKQAVYPRTLHFDLSSVVRTIAGPSNPHARVPTSELAARGISGEVENEPGLMPDGAVIIAAITSCTNTSNPRNVIAAGLLARNANAKGLTRKPWVKTSLAPGSKAVQLYLEEANLLPELESLGFGIVGFACTTCNGMSGALDPVIQQEVIDRDLYATAVLSGNRNFDGRIHPYAKQAFLASPPLVVAYAIAGTIRFDIEKDVLGLDKDGKPVRLINIWPSDAEIDAVIAASVKPEQFRKVYEPMFDLSVDYGDKVSPLYDWRPQSTYIRRPPYWEGALAGERTLKGMRPLAVLGDNITTDHLSPSNAIMMDSAAGEYLHKMGLPEEDFNSYATHRGDHLTAQRATFANPKLKNEMAIVDGKVKQGSLARIEPEGIVTRMWEAIETYMDRKQPLIIIAGADYGQGSSRDWAAKGVRLAGVEAIVAEGFERIHRTNLVGMGVLPLEFKAGENRATYGIDGTEVFDVIGSIAPRADLTVIITRKNGERVEVPVTCRLDTAEEVSIYEAGGVLQRFAQDFLESNLK</sequence>
<keyword id="KW-0004">4Fe-4S</keyword>
<keyword id="KW-0408">Iron</keyword>
<keyword id="KW-0411">Iron-sulfur</keyword>
<keyword id="KW-0456">Lyase</keyword>
<keyword id="KW-0479">Metal-binding</keyword>
<keyword id="KW-1185">Reference proteome</keyword>
<comment type="function">
    <text evidence="3">Involved in the catabolism of short chain fatty acids (SCFA) via the 2-methylcitrate cycle II (propionate degradation route). In vivo under anaerobic conditions, AcnD catalyzes the stereospecific dehydration of (2S,3S)-methylcitrate (2-MC) to yield the trans isomer of 2-methyl-aconitate (2-MCA). AcnD can also accept citrate and cis-aconitate, but with a lower efficiency. 2-methylisocitrate and isocitrate are not substrates.</text>
</comment>
<comment type="catalytic activity">
    <reaction evidence="3">
        <text>(2S,3S)-2-methylcitrate = 2-methyl-trans-aconitate + H2O</text>
        <dbReference type="Rhea" id="RHEA:26522"/>
        <dbReference type="ChEBI" id="CHEBI:15377"/>
        <dbReference type="ChEBI" id="CHEBI:58853"/>
        <dbReference type="ChEBI" id="CHEBI:58915"/>
        <dbReference type="EC" id="4.2.1.117"/>
    </reaction>
</comment>
<comment type="catalytic activity">
    <reaction evidence="3">
        <text>citrate = D-threo-isocitrate</text>
        <dbReference type="Rhea" id="RHEA:10336"/>
        <dbReference type="ChEBI" id="CHEBI:15562"/>
        <dbReference type="ChEBI" id="CHEBI:16947"/>
        <dbReference type="EC" id="4.2.1.3"/>
    </reaction>
</comment>
<comment type="cofactor">
    <cofactor evidence="3">
        <name>[4Fe-4S] cluster</name>
        <dbReference type="ChEBI" id="CHEBI:49883"/>
    </cofactor>
    <text evidence="1">Binds 1 [4Fe-4S] cluster per subunit.</text>
</comment>
<comment type="activity regulation">
    <text evidence="3">Inhibited by ferricyanide and EDTA.</text>
</comment>
<comment type="pathway">
    <text evidence="6">Organic acid metabolism; propanoate degradation.</text>
</comment>
<comment type="miscellaneous">
    <text evidence="3">Together with PrpF, able to restore the growth of prpD mutant on propionate.</text>
</comment>
<comment type="similarity">
    <text evidence="5">Belongs to the aconitase/IPM isomerase family.</text>
</comment>
<organism>
    <name type="scientific">Shewanella oneidensis (strain ATCC 700550 / JCM 31522 / CIP 106686 / LMG 19005 / NCIMB 14063 / MR-1)</name>
    <dbReference type="NCBI Taxonomy" id="211586"/>
    <lineage>
        <taxon>Bacteria</taxon>
        <taxon>Pseudomonadati</taxon>
        <taxon>Pseudomonadota</taxon>
        <taxon>Gammaproteobacteria</taxon>
        <taxon>Alteromonadales</taxon>
        <taxon>Shewanellaceae</taxon>
        <taxon>Shewanella</taxon>
    </lineage>
</organism>
<protein>
    <recommendedName>
        <fullName evidence="4">2-methylcitrate dehydratase (2-methyl-trans-aconitate forming)</fullName>
        <ecNumber evidence="3">4.2.1.117</ecNumber>
    </recommendedName>
    <alternativeName>
        <fullName evidence="4">Aconitate hydratase</fullName>
        <shortName evidence="4">ACN</shortName>
        <shortName evidence="4">Aconitase</shortName>
        <ecNumber evidence="3">4.2.1.3</ecNumber>
    </alternativeName>
</protein>
<reference key="1">
    <citation type="journal article" date="2002" name="Nat. Biotechnol.">
        <title>Genome sequence of the dissimilatory metal ion-reducing bacterium Shewanella oneidensis.</title>
        <authorList>
            <person name="Heidelberg J.F."/>
            <person name="Paulsen I.T."/>
            <person name="Nelson K.E."/>
            <person name="Gaidos E.J."/>
            <person name="Nelson W.C."/>
            <person name="Read T.D."/>
            <person name="Eisen J.A."/>
            <person name="Seshadri R."/>
            <person name="Ward N.L."/>
            <person name="Methe B.A."/>
            <person name="Clayton R.A."/>
            <person name="Meyer T."/>
            <person name="Tsapin A."/>
            <person name="Scott J."/>
            <person name="Beanan M.J."/>
            <person name="Brinkac L.M."/>
            <person name="Daugherty S.C."/>
            <person name="DeBoy R.T."/>
            <person name="Dodson R.J."/>
            <person name="Durkin A.S."/>
            <person name="Haft D.H."/>
            <person name="Kolonay J.F."/>
            <person name="Madupu R."/>
            <person name="Peterson J.D."/>
            <person name="Umayam L.A."/>
            <person name="White O."/>
            <person name="Wolf A.M."/>
            <person name="Vamathevan J.J."/>
            <person name="Weidman J.F."/>
            <person name="Impraim M."/>
            <person name="Lee K."/>
            <person name="Berry K.J."/>
            <person name="Lee C."/>
            <person name="Mueller J."/>
            <person name="Khouri H.M."/>
            <person name="Gill J."/>
            <person name="Utterback T.R."/>
            <person name="McDonald L.A."/>
            <person name="Feldblyum T.V."/>
            <person name="Smith H.O."/>
            <person name="Venter J.C."/>
            <person name="Nealson K.H."/>
            <person name="Fraser C.M."/>
        </authorList>
    </citation>
    <scope>NUCLEOTIDE SEQUENCE [LARGE SCALE GENOMIC DNA]</scope>
    <source>
        <strain>ATCC 700550 / JCM 31522 / CIP 106686 / LMG 19005 / NCIMB 14063 / MR-1</strain>
    </source>
</reference>
<reference key="2">
    <citation type="journal article" date="2004" name="J. Bacteriol.">
        <title>The acnD genes of Shewenella oneidensis and Vibrio cholerae encode a new Fe/S-dependent 2-methylcitrate dehydratase enzyme that requires prpF function in vivo.</title>
        <authorList>
            <person name="Grimek T.L."/>
            <person name="Escalante-Semerena J.C."/>
        </authorList>
    </citation>
    <scope>FUNCTION</scope>
    <scope>CATALYTIC ACTIVITY</scope>
    <scope>ACTIVITY REGULATION</scope>
    <scope>COFACTOR</scope>
    <scope>SUBSTRATE SPECIFICITY</scope>
</reference>
<feature type="chain" id="PRO_0000432942" description="2-methylcitrate dehydratase (2-methyl-trans-aconitate forming)">
    <location>
        <begin position="1"/>
        <end position="867"/>
    </location>
</feature>
<feature type="binding site" evidence="2">
    <location>
        <position position="410"/>
    </location>
    <ligand>
        <name>[4Fe-4S] cluster</name>
        <dbReference type="ChEBI" id="CHEBI:49883"/>
    </ligand>
</feature>
<feature type="binding site" evidence="2">
    <location>
        <position position="476"/>
    </location>
    <ligand>
        <name>[4Fe-4S] cluster</name>
        <dbReference type="ChEBI" id="CHEBI:49883"/>
    </ligand>
</feature>
<feature type="binding site" evidence="2">
    <location>
        <position position="479"/>
    </location>
    <ligand>
        <name>[4Fe-4S] cluster</name>
        <dbReference type="ChEBI" id="CHEBI:49883"/>
    </ligand>
</feature>
<evidence type="ECO:0000250" key="1">
    <source>
        <dbReference type="UniProtKB" id="P09339"/>
    </source>
</evidence>
<evidence type="ECO:0000250" key="2">
    <source>
        <dbReference type="UniProtKB" id="P36683"/>
    </source>
</evidence>
<evidence type="ECO:0000269" key="3">
    <source>
    </source>
</evidence>
<evidence type="ECO:0000303" key="4">
    <source>
    </source>
</evidence>
<evidence type="ECO:0000305" key="5"/>
<evidence type="ECO:0000305" key="6">
    <source>
    </source>
</evidence>